<evidence type="ECO:0000255" key="1">
    <source>
        <dbReference type="HAMAP-Rule" id="MF_00332"/>
    </source>
</evidence>
<evidence type="ECO:0000256" key="2">
    <source>
        <dbReference type="SAM" id="MobiDB-lite"/>
    </source>
</evidence>
<dbReference type="EMBL" id="CP001020">
    <property type="protein sequence ID" value="ACJ20346.1"/>
    <property type="molecule type" value="Genomic_DNA"/>
</dbReference>
<dbReference type="RefSeq" id="WP_005770882.1">
    <property type="nucleotide sequence ID" value="NC_011528.1"/>
</dbReference>
<dbReference type="SMR" id="B6J7U7"/>
<dbReference type="KEGG" id="cbc:CbuK_1153"/>
<dbReference type="HOGENOM" id="CLU_005965_2_1_6"/>
<dbReference type="GO" id="GO:0005524">
    <property type="term" value="F:ATP binding"/>
    <property type="evidence" value="ECO:0007669"/>
    <property type="project" value="UniProtKB-UniRule"/>
</dbReference>
<dbReference type="GO" id="GO:0140662">
    <property type="term" value="F:ATP-dependent protein folding chaperone"/>
    <property type="evidence" value="ECO:0007669"/>
    <property type="project" value="InterPro"/>
</dbReference>
<dbReference type="GO" id="GO:0051082">
    <property type="term" value="F:unfolded protein binding"/>
    <property type="evidence" value="ECO:0007669"/>
    <property type="project" value="InterPro"/>
</dbReference>
<dbReference type="CDD" id="cd10234">
    <property type="entry name" value="ASKHA_NBD_HSP70_DnaK-like"/>
    <property type="match status" value="1"/>
</dbReference>
<dbReference type="FunFam" id="2.60.34.10:FF:000014">
    <property type="entry name" value="Chaperone protein DnaK HSP70"/>
    <property type="match status" value="1"/>
</dbReference>
<dbReference type="FunFam" id="3.30.30.30:FF:000003">
    <property type="entry name" value="Heat shock protein 9"/>
    <property type="match status" value="1"/>
</dbReference>
<dbReference type="FunFam" id="1.20.1270.10:FF:000001">
    <property type="entry name" value="Molecular chaperone DnaK"/>
    <property type="match status" value="1"/>
</dbReference>
<dbReference type="FunFam" id="3.30.420.40:FF:000004">
    <property type="entry name" value="Molecular chaperone DnaK"/>
    <property type="match status" value="1"/>
</dbReference>
<dbReference type="FunFam" id="3.90.640.10:FF:000003">
    <property type="entry name" value="Molecular chaperone DnaK"/>
    <property type="match status" value="1"/>
</dbReference>
<dbReference type="Gene3D" id="1.20.1270.10">
    <property type="match status" value="1"/>
</dbReference>
<dbReference type="Gene3D" id="3.30.420.40">
    <property type="match status" value="2"/>
</dbReference>
<dbReference type="Gene3D" id="3.90.640.10">
    <property type="entry name" value="Actin, Chain A, domain 4"/>
    <property type="match status" value="1"/>
</dbReference>
<dbReference type="Gene3D" id="2.60.34.10">
    <property type="entry name" value="Substrate Binding Domain Of DNAk, Chain A, domain 1"/>
    <property type="match status" value="1"/>
</dbReference>
<dbReference type="HAMAP" id="MF_00332">
    <property type="entry name" value="DnaK"/>
    <property type="match status" value="1"/>
</dbReference>
<dbReference type="InterPro" id="IPR043129">
    <property type="entry name" value="ATPase_NBD"/>
</dbReference>
<dbReference type="InterPro" id="IPR012725">
    <property type="entry name" value="Chaperone_DnaK"/>
</dbReference>
<dbReference type="InterPro" id="IPR018181">
    <property type="entry name" value="Heat_shock_70_CS"/>
</dbReference>
<dbReference type="InterPro" id="IPR029048">
    <property type="entry name" value="HSP70_C_sf"/>
</dbReference>
<dbReference type="InterPro" id="IPR029047">
    <property type="entry name" value="HSP70_peptide-bd_sf"/>
</dbReference>
<dbReference type="InterPro" id="IPR013126">
    <property type="entry name" value="Hsp_70_fam"/>
</dbReference>
<dbReference type="NCBIfam" id="NF001413">
    <property type="entry name" value="PRK00290.1"/>
    <property type="match status" value="1"/>
</dbReference>
<dbReference type="NCBIfam" id="NF003520">
    <property type="entry name" value="PRK05183.1"/>
    <property type="match status" value="1"/>
</dbReference>
<dbReference type="NCBIfam" id="TIGR02350">
    <property type="entry name" value="prok_dnaK"/>
    <property type="match status" value="1"/>
</dbReference>
<dbReference type="PANTHER" id="PTHR19375">
    <property type="entry name" value="HEAT SHOCK PROTEIN 70KDA"/>
    <property type="match status" value="1"/>
</dbReference>
<dbReference type="Pfam" id="PF00012">
    <property type="entry name" value="HSP70"/>
    <property type="match status" value="1"/>
</dbReference>
<dbReference type="PRINTS" id="PR00301">
    <property type="entry name" value="HEATSHOCK70"/>
</dbReference>
<dbReference type="SUPFAM" id="SSF53067">
    <property type="entry name" value="Actin-like ATPase domain"/>
    <property type="match status" value="2"/>
</dbReference>
<dbReference type="SUPFAM" id="SSF100934">
    <property type="entry name" value="Heat shock protein 70kD (HSP70), C-terminal subdomain"/>
    <property type="match status" value="1"/>
</dbReference>
<dbReference type="SUPFAM" id="SSF100920">
    <property type="entry name" value="Heat shock protein 70kD (HSP70), peptide-binding domain"/>
    <property type="match status" value="1"/>
</dbReference>
<dbReference type="PROSITE" id="PS00297">
    <property type="entry name" value="HSP70_1"/>
    <property type="match status" value="1"/>
</dbReference>
<dbReference type="PROSITE" id="PS00329">
    <property type="entry name" value="HSP70_2"/>
    <property type="match status" value="1"/>
</dbReference>
<dbReference type="PROSITE" id="PS01036">
    <property type="entry name" value="HSP70_3"/>
    <property type="match status" value="1"/>
</dbReference>
<gene>
    <name evidence="1" type="primary">dnaK</name>
    <name type="ordered locus">CbuK_1153</name>
</gene>
<comment type="function">
    <text evidence="1">Acts as a chaperone.</text>
</comment>
<comment type="induction">
    <text evidence="1">By stress conditions e.g. heat shock.</text>
</comment>
<comment type="similarity">
    <text evidence="1">Belongs to the heat shock protein 70 family.</text>
</comment>
<sequence length="656" mass="70755">MAEIIGIDLGTTNSCVAVMEGGKVRVIENAEGSRTTPSIVAYTKDGEVLVGASAKRQAVTNADRTLYAIKRLIGRRFDDNVVQKDIKMVPYKIIKADNGDAWVEVKDKEGKSQKLAPPQISAQVLIKMKKTAEDYLGHEVKDAVITVPAYFNDSQRQATKDAGKIAGLNVKRIINEPTAAALAYGMDKKKGDRKIAVYDLGGGTFDISIIEIAEVDGEHQFEVLATNGDTFLGGEDFDLRLIDYLAGEFKKDEGVDLHNDPLALQRLKEAAEKAKIELSSSQQTDVNLPYITADASGPKHLNIRLTRAKLESLVEDLVERTIEPCKVAIKDAGLKVSEIDDVILVGGQTRMPKVQEAVKNFFGKEARKDVNPDEAVAIGAAIQGAVLSGEVKDVLLLDVTPLSLGIETLGGVMTKLIEKNTTIPTKANQVFSTADDNQTAVTVHVLQGEREMASANKSLGRFDLSDIPPAPRGVPQIEVTFDIDANGILHVSAKDKATGKEQSIVIKASSGLSDEEVEKMVKDAEAHRDSDRKFHELVDARNQADAMIHAAEKSVKDLGSEVSADEKSAIEKAVNELKEAMKGNDKDAIEAKTKALTEHSSKLAERVYAKKGGAAGAPPGGEAEGEPQAQAGGKKEDVVDAEFEEVKDEKKKDEDK</sequence>
<protein>
    <recommendedName>
        <fullName evidence="1">Chaperone protein DnaK</fullName>
    </recommendedName>
    <alternativeName>
        <fullName evidence="1">HSP70</fullName>
    </alternativeName>
    <alternativeName>
        <fullName evidence="1">Heat shock 70 kDa protein</fullName>
    </alternativeName>
    <alternativeName>
        <fullName evidence="1">Heat shock protein 70</fullName>
    </alternativeName>
</protein>
<keyword id="KW-0067">ATP-binding</keyword>
<keyword id="KW-0143">Chaperone</keyword>
<keyword id="KW-0547">Nucleotide-binding</keyword>
<keyword id="KW-0597">Phosphoprotein</keyword>
<keyword id="KW-0346">Stress response</keyword>
<reference key="1">
    <citation type="journal article" date="2009" name="Infect. Immun.">
        <title>Comparative genomics reveal extensive transposon-mediated genomic plasticity and diversity among potential effector proteins within the genus Coxiella.</title>
        <authorList>
            <person name="Beare P.A."/>
            <person name="Unsworth N."/>
            <person name="Andoh M."/>
            <person name="Voth D.E."/>
            <person name="Omsland A."/>
            <person name="Gilk S.D."/>
            <person name="Williams K.P."/>
            <person name="Sobral B.W."/>
            <person name="Kupko J.J. III"/>
            <person name="Porcella S.F."/>
            <person name="Samuel J.E."/>
            <person name="Heinzen R.A."/>
        </authorList>
    </citation>
    <scope>NUCLEOTIDE SEQUENCE [LARGE SCALE GENOMIC DNA]</scope>
    <source>
        <strain>CbuK_Q154</strain>
    </source>
</reference>
<organism>
    <name type="scientific">Coxiella burnetii (strain CbuK_Q154)</name>
    <name type="common">Coxiella burnetii (strain Q154)</name>
    <dbReference type="NCBI Taxonomy" id="434924"/>
    <lineage>
        <taxon>Bacteria</taxon>
        <taxon>Pseudomonadati</taxon>
        <taxon>Pseudomonadota</taxon>
        <taxon>Gammaproteobacteria</taxon>
        <taxon>Legionellales</taxon>
        <taxon>Coxiellaceae</taxon>
        <taxon>Coxiella</taxon>
    </lineage>
</organism>
<accession>B6J7U7</accession>
<proteinExistence type="inferred from homology"/>
<feature type="chain" id="PRO_1000119693" description="Chaperone protein DnaK">
    <location>
        <begin position="1"/>
        <end position="656"/>
    </location>
</feature>
<feature type="region of interest" description="Disordered" evidence="2">
    <location>
        <begin position="607"/>
        <end position="656"/>
    </location>
</feature>
<feature type="compositionally biased region" description="Low complexity" evidence="2">
    <location>
        <begin position="620"/>
        <end position="632"/>
    </location>
</feature>
<feature type="compositionally biased region" description="Basic and acidic residues" evidence="2">
    <location>
        <begin position="647"/>
        <end position="656"/>
    </location>
</feature>
<feature type="modified residue" description="Phosphothreonine; by autocatalysis" evidence="1">
    <location>
        <position position="204"/>
    </location>
</feature>
<name>DNAK_COXB1</name>